<name>SYQ_ECO55</name>
<keyword id="KW-0030">Aminoacyl-tRNA synthetase</keyword>
<keyword id="KW-0067">ATP-binding</keyword>
<keyword id="KW-0963">Cytoplasm</keyword>
<keyword id="KW-0436">Ligase</keyword>
<keyword id="KW-0547">Nucleotide-binding</keyword>
<keyword id="KW-0648">Protein biosynthesis</keyword>
<keyword id="KW-1185">Reference proteome</keyword>
<proteinExistence type="inferred from homology"/>
<protein>
    <recommendedName>
        <fullName evidence="1">Glutamine--tRNA ligase</fullName>
        <ecNumber evidence="1">6.1.1.18</ecNumber>
    </recommendedName>
    <alternativeName>
        <fullName evidence="1">Glutaminyl-tRNA synthetase</fullName>
        <shortName evidence="1">GlnRS</shortName>
    </alternativeName>
</protein>
<evidence type="ECO:0000255" key="1">
    <source>
        <dbReference type="HAMAP-Rule" id="MF_00126"/>
    </source>
</evidence>
<gene>
    <name evidence="1" type="primary">glnS</name>
    <name type="ordered locus">EC55989_0666</name>
</gene>
<organism>
    <name type="scientific">Escherichia coli (strain 55989 / EAEC)</name>
    <dbReference type="NCBI Taxonomy" id="585055"/>
    <lineage>
        <taxon>Bacteria</taxon>
        <taxon>Pseudomonadati</taxon>
        <taxon>Pseudomonadota</taxon>
        <taxon>Gammaproteobacteria</taxon>
        <taxon>Enterobacterales</taxon>
        <taxon>Enterobacteriaceae</taxon>
        <taxon>Escherichia</taxon>
    </lineage>
</organism>
<comment type="catalytic activity">
    <reaction evidence="1">
        <text>tRNA(Gln) + L-glutamine + ATP = L-glutaminyl-tRNA(Gln) + AMP + diphosphate</text>
        <dbReference type="Rhea" id="RHEA:20121"/>
        <dbReference type="Rhea" id="RHEA-COMP:9662"/>
        <dbReference type="Rhea" id="RHEA-COMP:9681"/>
        <dbReference type="ChEBI" id="CHEBI:30616"/>
        <dbReference type="ChEBI" id="CHEBI:33019"/>
        <dbReference type="ChEBI" id="CHEBI:58359"/>
        <dbReference type="ChEBI" id="CHEBI:78442"/>
        <dbReference type="ChEBI" id="CHEBI:78521"/>
        <dbReference type="ChEBI" id="CHEBI:456215"/>
        <dbReference type="EC" id="6.1.1.18"/>
    </reaction>
</comment>
<comment type="subunit">
    <text evidence="1">Monomer.</text>
</comment>
<comment type="subcellular location">
    <subcellularLocation>
        <location evidence="1">Cytoplasm</location>
    </subcellularLocation>
</comment>
<comment type="similarity">
    <text evidence="1">Belongs to the class-I aminoacyl-tRNA synthetase family.</text>
</comment>
<reference key="1">
    <citation type="journal article" date="2009" name="PLoS Genet.">
        <title>Organised genome dynamics in the Escherichia coli species results in highly diverse adaptive paths.</title>
        <authorList>
            <person name="Touchon M."/>
            <person name="Hoede C."/>
            <person name="Tenaillon O."/>
            <person name="Barbe V."/>
            <person name="Baeriswyl S."/>
            <person name="Bidet P."/>
            <person name="Bingen E."/>
            <person name="Bonacorsi S."/>
            <person name="Bouchier C."/>
            <person name="Bouvet O."/>
            <person name="Calteau A."/>
            <person name="Chiapello H."/>
            <person name="Clermont O."/>
            <person name="Cruveiller S."/>
            <person name="Danchin A."/>
            <person name="Diard M."/>
            <person name="Dossat C."/>
            <person name="Karoui M.E."/>
            <person name="Frapy E."/>
            <person name="Garry L."/>
            <person name="Ghigo J.M."/>
            <person name="Gilles A.M."/>
            <person name="Johnson J."/>
            <person name="Le Bouguenec C."/>
            <person name="Lescat M."/>
            <person name="Mangenot S."/>
            <person name="Martinez-Jehanne V."/>
            <person name="Matic I."/>
            <person name="Nassif X."/>
            <person name="Oztas S."/>
            <person name="Petit M.A."/>
            <person name="Pichon C."/>
            <person name="Rouy Z."/>
            <person name="Ruf C.S."/>
            <person name="Schneider D."/>
            <person name="Tourret J."/>
            <person name="Vacherie B."/>
            <person name="Vallenet D."/>
            <person name="Medigue C."/>
            <person name="Rocha E.P.C."/>
            <person name="Denamur E."/>
        </authorList>
    </citation>
    <scope>NUCLEOTIDE SEQUENCE [LARGE SCALE GENOMIC DNA]</scope>
    <source>
        <strain>55989 / EAEC</strain>
    </source>
</reference>
<feature type="chain" id="PRO_1000199093" description="Glutamine--tRNA ligase">
    <location>
        <begin position="1"/>
        <end position="554"/>
    </location>
</feature>
<feature type="region of interest" description="Interaction with tRNA" evidence="1">
    <location>
        <begin position="317"/>
        <end position="324"/>
    </location>
</feature>
<feature type="short sequence motif" description="'HIGH' region" evidence="1">
    <location>
        <begin position="34"/>
        <end position="44"/>
    </location>
</feature>
<feature type="short sequence motif" description="'KMSKS' region" evidence="1">
    <location>
        <begin position="268"/>
        <end position="272"/>
    </location>
</feature>
<feature type="binding site" evidence="1">
    <location>
        <begin position="35"/>
        <end position="37"/>
    </location>
    <ligand>
        <name>ATP</name>
        <dbReference type="ChEBI" id="CHEBI:30616"/>
    </ligand>
</feature>
<feature type="binding site" evidence="1">
    <location>
        <begin position="41"/>
        <end position="47"/>
    </location>
    <ligand>
        <name>ATP</name>
        <dbReference type="ChEBI" id="CHEBI:30616"/>
    </ligand>
</feature>
<feature type="binding site" evidence="1">
    <location>
        <position position="67"/>
    </location>
    <ligand>
        <name>L-glutamine</name>
        <dbReference type="ChEBI" id="CHEBI:58359"/>
    </ligand>
</feature>
<feature type="binding site" evidence="1">
    <location>
        <position position="212"/>
    </location>
    <ligand>
        <name>L-glutamine</name>
        <dbReference type="ChEBI" id="CHEBI:58359"/>
    </ligand>
</feature>
<feature type="binding site" evidence="1">
    <location>
        <position position="231"/>
    </location>
    <ligand>
        <name>ATP</name>
        <dbReference type="ChEBI" id="CHEBI:30616"/>
    </ligand>
</feature>
<feature type="binding site" evidence="1">
    <location>
        <begin position="261"/>
        <end position="262"/>
    </location>
    <ligand>
        <name>ATP</name>
        <dbReference type="ChEBI" id="CHEBI:30616"/>
    </ligand>
</feature>
<feature type="binding site" evidence="1">
    <location>
        <begin position="269"/>
        <end position="271"/>
    </location>
    <ligand>
        <name>ATP</name>
        <dbReference type="ChEBI" id="CHEBI:30616"/>
    </ligand>
</feature>
<accession>B7L9L7</accession>
<dbReference type="EC" id="6.1.1.18" evidence="1"/>
<dbReference type="EMBL" id="CU928145">
    <property type="protein sequence ID" value="CAU96536.1"/>
    <property type="molecule type" value="Genomic_DNA"/>
</dbReference>
<dbReference type="RefSeq" id="WP_001287154.1">
    <property type="nucleotide sequence ID" value="NC_011748.1"/>
</dbReference>
<dbReference type="SMR" id="B7L9L7"/>
<dbReference type="GeneID" id="93776805"/>
<dbReference type="KEGG" id="eck:EC55989_0666"/>
<dbReference type="HOGENOM" id="CLU_001882_2_3_6"/>
<dbReference type="Proteomes" id="UP000000746">
    <property type="component" value="Chromosome"/>
</dbReference>
<dbReference type="GO" id="GO:0005829">
    <property type="term" value="C:cytosol"/>
    <property type="evidence" value="ECO:0007669"/>
    <property type="project" value="TreeGrafter"/>
</dbReference>
<dbReference type="GO" id="GO:0005524">
    <property type="term" value="F:ATP binding"/>
    <property type="evidence" value="ECO:0007669"/>
    <property type="project" value="UniProtKB-UniRule"/>
</dbReference>
<dbReference type="GO" id="GO:0004819">
    <property type="term" value="F:glutamine-tRNA ligase activity"/>
    <property type="evidence" value="ECO:0007669"/>
    <property type="project" value="UniProtKB-UniRule"/>
</dbReference>
<dbReference type="GO" id="GO:0006425">
    <property type="term" value="P:glutaminyl-tRNA aminoacylation"/>
    <property type="evidence" value="ECO:0007669"/>
    <property type="project" value="InterPro"/>
</dbReference>
<dbReference type="GO" id="GO:0006424">
    <property type="term" value="P:glutamyl-tRNA aminoacylation"/>
    <property type="evidence" value="ECO:0007669"/>
    <property type="project" value="UniProtKB-UniRule"/>
</dbReference>
<dbReference type="CDD" id="cd00807">
    <property type="entry name" value="GlnRS_core"/>
    <property type="match status" value="1"/>
</dbReference>
<dbReference type="FunFam" id="1.10.1160.10:FF:000001">
    <property type="entry name" value="Glutamine--tRNA ligase"/>
    <property type="match status" value="1"/>
</dbReference>
<dbReference type="FunFam" id="2.40.240.10:FF:000001">
    <property type="entry name" value="Glutamine--tRNA ligase"/>
    <property type="match status" value="1"/>
</dbReference>
<dbReference type="FunFam" id="2.40.240.10:FF:000003">
    <property type="entry name" value="Glutamine--tRNA ligase"/>
    <property type="match status" value="1"/>
</dbReference>
<dbReference type="FunFam" id="3.90.800.10:FF:000001">
    <property type="entry name" value="Glutamine--tRNA ligase"/>
    <property type="match status" value="1"/>
</dbReference>
<dbReference type="FunFam" id="3.40.50.620:FF:000037">
    <property type="entry name" value="Glutamine--tRNA ligase cytoplasmic"/>
    <property type="match status" value="1"/>
</dbReference>
<dbReference type="Gene3D" id="1.10.1160.10">
    <property type="entry name" value="Glutamyl-trna Synthetase, Domain 2"/>
    <property type="match status" value="1"/>
</dbReference>
<dbReference type="Gene3D" id="3.90.800.10">
    <property type="entry name" value="Glutamyl-tRNA Synthetase, Domain 3"/>
    <property type="match status" value="1"/>
</dbReference>
<dbReference type="Gene3D" id="3.40.50.620">
    <property type="entry name" value="HUPs"/>
    <property type="match status" value="1"/>
</dbReference>
<dbReference type="Gene3D" id="2.40.240.10">
    <property type="entry name" value="Ribosomal Protein L25, Chain P"/>
    <property type="match status" value="2"/>
</dbReference>
<dbReference type="HAMAP" id="MF_00126">
    <property type="entry name" value="Gln_tRNA_synth"/>
    <property type="match status" value="1"/>
</dbReference>
<dbReference type="InterPro" id="IPR001412">
    <property type="entry name" value="aa-tRNA-synth_I_CS"/>
</dbReference>
<dbReference type="InterPro" id="IPR004514">
    <property type="entry name" value="Gln-tRNA-synth"/>
</dbReference>
<dbReference type="InterPro" id="IPR050132">
    <property type="entry name" value="Gln/Glu-tRNA_Ligase"/>
</dbReference>
<dbReference type="InterPro" id="IPR022861">
    <property type="entry name" value="Gln_tRNA_ligase_bac"/>
</dbReference>
<dbReference type="InterPro" id="IPR000924">
    <property type="entry name" value="Glu/Gln-tRNA-synth"/>
</dbReference>
<dbReference type="InterPro" id="IPR020058">
    <property type="entry name" value="Glu/Gln-tRNA-synth_Ib_cat-dom"/>
</dbReference>
<dbReference type="InterPro" id="IPR020059">
    <property type="entry name" value="Glu/Gln-tRNA-synth_Ib_codon-bd"/>
</dbReference>
<dbReference type="InterPro" id="IPR020061">
    <property type="entry name" value="Glu_tRNA_lig_a-bdl"/>
</dbReference>
<dbReference type="InterPro" id="IPR020056">
    <property type="entry name" value="Rbsml_bL25/Gln-tRNA_synth_N"/>
</dbReference>
<dbReference type="InterPro" id="IPR011035">
    <property type="entry name" value="Ribosomal_bL25/Gln-tRNA_synth"/>
</dbReference>
<dbReference type="InterPro" id="IPR014729">
    <property type="entry name" value="Rossmann-like_a/b/a_fold"/>
</dbReference>
<dbReference type="InterPro" id="IPR049437">
    <property type="entry name" value="tRNA-synt_1c_C2"/>
</dbReference>
<dbReference type="NCBIfam" id="TIGR00440">
    <property type="entry name" value="glnS"/>
    <property type="match status" value="1"/>
</dbReference>
<dbReference type="NCBIfam" id="NF011291">
    <property type="entry name" value="PRK14703.1"/>
    <property type="match status" value="1"/>
</dbReference>
<dbReference type="PANTHER" id="PTHR43097:SF5">
    <property type="entry name" value="GLUTAMATE--TRNA LIGASE"/>
    <property type="match status" value="1"/>
</dbReference>
<dbReference type="PANTHER" id="PTHR43097">
    <property type="entry name" value="GLUTAMINE-TRNA LIGASE"/>
    <property type="match status" value="1"/>
</dbReference>
<dbReference type="Pfam" id="PF00749">
    <property type="entry name" value="tRNA-synt_1c"/>
    <property type="match status" value="1"/>
</dbReference>
<dbReference type="Pfam" id="PF03950">
    <property type="entry name" value="tRNA-synt_1c_C"/>
    <property type="match status" value="1"/>
</dbReference>
<dbReference type="Pfam" id="PF20974">
    <property type="entry name" value="tRNA-synt_1c_C2"/>
    <property type="match status" value="1"/>
</dbReference>
<dbReference type="PRINTS" id="PR00987">
    <property type="entry name" value="TRNASYNTHGLU"/>
</dbReference>
<dbReference type="SUPFAM" id="SSF52374">
    <property type="entry name" value="Nucleotidylyl transferase"/>
    <property type="match status" value="1"/>
</dbReference>
<dbReference type="SUPFAM" id="SSF50715">
    <property type="entry name" value="Ribosomal protein L25-like"/>
    <property type="match status" value="1"/>
</dbReference>
<dbReference type="PROSITE" id="PS00178">
    <property type="entry name" value="AA_TRNA_LIGASE_I"/>
    <property type="match status" value="1"/>
</dbReference>
<sequence length="554" mass="63478">MSEAEARPTNFIRQIIDEDLASGKHTTVHTRFPPEPNGYLHIGHAKSICLNFGIAQDYKGQCNLRFDDTNPVKEDIEYVESIKNDVEWLGFHWSGNVRYSSDYFDQLHAYAIELINKGLAYVDELTPEQIREYRGTLTQPGKNSPYRDRSVEENLALFEKMRAGGFEEGKACLRAKIDMASPFIVMRDPVLYRIKFAEHHQTGNKWCIYPMYDFTHCISDALEGITHSLCTLEFQDNRRLYDWVLDNITIPVHPRQYEFSRLNLEYTVMSKRKLNLLVTDKHVEGWDDPRMPTISGLRRRGYTAASIREFCKRIGVTKQDNTIEMASLESCIREDLNENAPRAMAVIDPVKLVIENYQGEGEMVTMPNHPNKPEMGSRQVPFSGEIWIDRADFREEANKQYKRLVLGKEVRLRNAYVIKAERVEKDAEGNITTIFCTYDADTLSKDPADGRKVKGVIHWVSAAHALPVEIRLYDRLFSVPNPGAADDFLSVINPESLVIKQGFAEPSLKDAVAGKAFQFEREGYFCLDSRHSTAEKPVFNRTVGLRDTWAKVGE</sequence>